<dbReference type="EC" id="6.1.1.1" evidence="1"/>
<dbReference type="EMBL" id="CP001048">
    <property type="protein sequence ID" value="ACC89321.1"/>
    <property type="molecule type" value="Genomic_DNA"/>
</dbReference>
<dbReference type="RefSeq" id="WP_011192524.1">
    <property type="nucleotide sequence ID" value="NZ_CP009780.1"/>
</dbReference>
<dbReference type="SMR" id="B2K5H0"/>
<dbReference type="GeneID" id="49785720"/>
<dbReference type="KEGG" id="ypb:YPTS_2360"/>
<dbReference type="PATRIC" id="fig|502801.10.peg.1763"/>
<dbReference type="GO" id="GO:0005829">
    <property type="term" value="C:cytosol"/>
    <property type="evidence" value="ECO:0007669"/>
    <property type="project" value="TreeGrafter"/>
</dbReference>
<dbReference type="GO" id="GO:0005524">
    <property type="term" value="F:ATP binding"/>
    <property type="evidence" value="ECO:0007669"/>
    <property type="project" value="UniProtKB-UniRule"/>
</dbReference>
<dbReference type="GO" id="GO:0003723">
    <property type="term" value="F:RNA binding"/>
    <property type="evidence" value="ECO:0007669"/>
    <property type="project" value="UniProtKB-KW"/>
</dbReference>
<dbReference type="GO" id="GO:0004831">
    <property type="term" value="F:tyrosine-tRNA ligase activity"/>
    <property type="evidence" value="ECO:0007669"/>
    <property type="project" value="UniProtKB-UniRule"/>
</dbReference>
<dbReference type="GO" id="GO:0006437">
    <property type="term" value="P:tyrosyl-tRNA aminoacylation"/>
    <property type="evidence" value="ECO:0007669"/>
    <property type="project" value="UniProtKB-UniRule"/>
</dbReference>
<dbReference type="CDD" id="cd00165">
    <property type="entry name" value="S4"/>
    <property type="match status" value="1"/>
</dbReference>
<dbReference type="CDD" id="cd00805">
    <property type="entry name" value="TyrRS_core"/>
    <property type="match status" value="1"/>
</dbReference>
<dbReference type="FunFam" id="1.10.240.10:FF:000001">
    <property type="entry name" value="Tyrosine--tRNA ligase"/>
    <property type="match status" value="1"/>
</dbReference>
<dbReference type="FunFam" id="3.10.290.10:FF:000007">
    <property type="entry name" value="Tyrosine--tRNA ligase"/>
    <property type="match status" value="1"/>
</dbReference>
<dbReference type="FunFam" id="3.40.50.620:FF:000008">
    <property type="entry name" value="Tyrosine--tRNA ligase"/>
    <property type="match status" value="1"/>
</dbReference>
<dbReference type="Gene3D" id="3.40.50.620">
    <property type="entry name" value="HUPs"/>
    <property type="match status" value="1"/>
</dbReference>
<dbReference type="Gene3D" id="3.10.290.10">
    <property type="entry name" value="RNA-binding S4 domain"/>
    <property type="match status" value="1"/>
</dbReference>
<dbReference type="Gene3D" id="1.10.240.10">
    <property type="entry name" value="Tyrosyl-Transfer RNA Synthetase"/>
    <property type="match status" value="1"/>
</dbReference>
<dbReference type="HAMAP" id="MF_02006">
    <property type="entry name" value="Tyr_tRNA_synth_type1"/>
    <property type="match status" value="1"/>
</dbReference>
<dbReference type="InterPro" id="IPR001412">
    <property type="entry name" value="aa-tRNA-synth_I_CS"/>
</dbReference>
<dbReference type="InterPro" id="IPR002305">
    <property type="entry name" value="aa-tRNA-synth_Ic"/>
</dbReference>
<dbReference type="InterPro" id="IPR014729">
    <property type="entry name" value="Rossmann-like_a/b/a_fold"/>
</dbReference>
<dbReference type="InterPro" id="IPR002942">
    <property type="entry name" value="S4_RNA-bd"/>
</dbReference>
<dbReference type="InterPro" id="IPR036986">
    <property type="entry name" value="S4_RNA-bd_sf"/>
</dbReference>
<dbReference type="InterPro" id="IPR054608">
    <property type="entry name" value="SYY-like_C"/>
</dbReference>
<dbReference type="InterPro" id="IPR002307">
    <property type="entry name" value="Tyr-tRNA-ligase"/>
</dbReference>
<dbReference type="InterPro" id="IPR024088">
    <property type="entry name" value="Tyr-tRNA-ligase_bac-type"/>
</dbReference>
<dbReference type="InterPro" id="IPR024107">
    <property type="entry name" value="Tyr-tRNA-ligase_bac_1"/>
</dbReference>
<dbReference type="NCBIfam" id="TIGR00234">
    <property type="entry name" value="tyrS"/>
    <property type="match status" value="1"/>
</dbReference>
<dbReference type="PANTHER" id="PTHR11766:SF0">
    <property type="entry name" value="TYROSINE--TRNA LIGASE, MITOCHONDRIAL"/>
    <property type="match status" value="1"/>
</dbReference>
<dbReference type="PANTHER" id="PTHR11766">
    <property type="entry name" value="TYROSYL-TRNA SYNTHETASE"/>
    <property type="match status" value="1"/>
</dbReference>
<dbReference type="Pfam" id="PF22421">
    <property type="entry name" value="SYY_C-terminal"/>
    <property type="match status" value="1"/>
</dbReference>
<dbReference type="Pfam" id="PF00579">
    <property type="entry name" value="tRNA-synt_1b"/>
    <property type="match status" value="1"/>
</dbReference>
<dbReference type="PRINTS" id="PR01040">
    <property type="entry name" value="TRNASYNTHTYR"/>
</dbReference>
<dbReference type="SMART" id="SM00363">
    <property type="entry name" value="S4"/>
    <property type="match status" value="1"/>
</dbReference>
<dbReference type="SUPFAM" id="SSF55174">
    <property type="entry name" value="Alpha-L RNA-binding motif"/>
    <property type="match status" value="1"/>
</dbReference>
<dbReference type="SUPFAM" id="SSF52374">
    <property type="entry name" value="Nucleotidylyl transferase"/>
    <property type="match status" value="1"/>
</dbReference>
<dbReference type="PROSITE" id="PS00178">
    <property type="entry name" value="AA_TRNA_LIGASE_I"/>
    <property type="match status" value="1"/>
</dbReference>
<dbReference type="PROSITE" id="PS50889">
    <property type="entry name" value="S4"/>
    <property type="match status" value="1"/>
</dbReference>
<evidence type="ECO:0000255" key="1">
    <source>
        <dbReference type="HAMAP-Rule" id="MF_02006"/>
    </source>
</evidence>
<feature type="chain" id="PRO_1000189349" description="Tyrosine--tRNA ligase">
    <location>
        <begin position="1"/>
        <end position="424"/>
    </location>
</feature>
<feature type="domain" description="S4 RNA-binding" evidence="1">
    <location>
        <begin position="357"/>
        <end position="414"/>
    </location>
</feature>
<feature type="short sequence motif" description="'HIGH' region">
    <location>
        <begin position="42"/>
        <end position="51"/>
    </location>
</feature>
<feature type="short sequence motif" description="'KMSKS' region">
    <location>
        <begin position="235"/>
        <end position="239"/>
    </location>
</feature>
<feature type="binding site" evidence="1">
    <location>
        <position position="37"/>
    </location>
    <ligand>
        <name>L-tyrosine</name>
        <dbReference type="ChEBI" id="CHEBI:58315"/>
    </ligand>
</feature>
<feature type="binding site" evidence="1">
    <location>
        <position position="175"/>
    </location>
    <ligand>
        <name>L-tyrosine</name>
        <dbReference type="ChEBI" id="CHEBI:58315"/>
    </ligand>
</feature>
<feature type="binding site" evidence="1">
    <location>
        <position position="179"/>
    </location>
    <ligand>
        <name>L-tyrosine</name>
        <dbReference type="ChEBI" id="CHEBI:58315"/>
    </ligand>
</feature>
<feature type="binding site" evidence="1">
    <location>
        <position position="238"/>
    </location>
    <ligand>
        <name>ATP</name>
        <dbReference type="ChEBI" id="CHEBI:30616"/>
    </ligand>
</feature>
<proteinExistence type="inferred from homology"/>
<gene>
    <name evidence="1" type="primary">tyrS</name>
    <name type="ordered locus">YPTS_2360</name>
</gene>
<name>SYY_YERPB</name>
<reference key="1">
    <citation type="submission" date="2008-04" db="EMBL/GenBank/DDBJ databases">
        <title>Complete sequence of Yersinia pseudotuberculosis PB1/+.</title>
        <authorList>
            <person name="Copeland A."/>
            <person name="Lucas S."/>
            <person name="Lapidus A."/>
            <person name="Glavina del Rio T."/>
            <person name="Dalin E."/>
            <person name="Tice H."/>
            <person name="Bruce D."/>
            <person name="Goodwin L."/>
            <person name="Pitluck S."/>
            <person name="Munk A.C."/>
            <person name="Brettin T."/>
            <person name="Detter J.C."/>
            <person name="Han C."/>
            <person name="Tapia R."/>
            <person name="Schmutz J."/>
            <person name="Larimer F."/>
            <person name="Land M."/>
            <person name="Hauser L."/>
            <person name="Challacombe J.F."/>
            <person name="Green L."/>
            <person name="Lindler L.E."/>
            <person name="Nikolich M.P."/>
            <person name="Richardson P."/>
        </authorList>
    </citation>
    <scope>NUCLEOTIDE SEQUENCE [LARGE SCALE GENOMIC DNA]</scope>
    <source>
        <strain>PB1/+</strain>
    </source>
</reference>
<protein>
    <recommendedName>
        <fullName evidence="1">Tyrosine--tRNA ligase</fullName>
        <ecNumber evidence="1">6.1.1.1</ecNumber>
    </recommendedName>
    <alternativeName>
        <fullName evidence="1">Tyrosyl-tRNA synthetase</fullName>
        <shortName evidence="1">TyrRS</shortName>
    </alternativeName>
</protein>
<accession>B2K5H0</accession>
<comment type="function">
    <text evidence="1">Catalyzes the attachment of tyrosine to tRNA(Tyr) in a two-step reaction: tyrosine is first activated by ATP to form Tyr-AMP and then transferred to the acceptor end of tRNA(Tyr).</text>
</comment>
<comment type="catalytic activity">
    <reaction evidence="1">
        <text>tRNA(Tyr) + L-tyrosine + ATP = L-tyrosyl-tRNA(Tyr) + AMP + diphosphate + H(+)</text>
        <dbReference type="Rhea" id="RHEA:10220"/>
        <dbReference type="Rhea" id="RHEA-COMP:9706"/>
        <dbReference type="Rhea" id="RHEA-COMP:9707"/>
        <dbReference type="ChEBI" id="CHEBI:15378"/>
        <dbReference type="ChEBI" id="CHEBI:30616"/>
        <dbReference type="ChEBI" id="CHEBI:33019"/>
        <dbReference type="ChEBI" id="CHEBI:58315"/>
        <dbReference type="ChEBI" id="CHEBI:78442"/>
        <dbReference type="ChEBI" id="CHEBI:78536"/>
        <dbReference type="ChEBI" id="CHEBI:456215"/>
        <dbReference type="EC" id="6.1.1.1"/>
    </reaction>
</comment>
<comment type="subunit">
    <text evidence="1">Homodimer.</text>
</comment>
<comment type="subcellular location">
    <subcellularLocation>
        <location evidence="1">Cytoplasm</location>
    </subcellularLocation>
</comment>
<comment type="similarity">
    <text evidence="1">Belongs to the class-I aminoacyl-tRNA synthetase family. TyrS type 1 subfamily.</text>
</comment>
<keyword id="KW-0030">Aminoacyl-tRNA synthetase</keyword>
<keyword id="KW-0067">ATP-binding</keyword>
<keyword id="KW-0963">Cytoplasm</keyword>
<keyword id="KW-0436">Ligase</keyword>
<keyword id="KW-0547">Nucleotide-binding</keyword>
<keyword id="KW-0648">Protein biosynthesis</keyword>
<keyword id="KW-0694">RNA-binding</keyword>
<organism>
    <name type="scientific">Yersinia pseudotuberculosis serotype IB (strain PB1/+)</name>
    <dbReference type="NCBI Taxonomy" id="502801"/>
    <lineage>
        <taxon>Bacteria</taxon>
        <taxon>Pseudomonadati</taxon>
        <taxon>Pseudomonadota</taxon>
        <taxon>Gammaproteobacteria</taxon>
        <taxon>Enterobacterales</taxon>
        <taxon>Yersiniaceae</taxon>
        <taxon>Yersinia</taxon>
    </lineage>
</organism>
<sequence length="424" mass="47172">MTSSNLIKQLQERGLVAQVTDEDALAERLAQGPISLYCGFDPTADSLHLGHLVPLLCLKRFQLAGHRPVALVGGATGMIGDPSFKASERKLNTEDTVNEWVEKIRHQVSPFLDFDCGENSAIAANNYDWFGGMNVLTFLRDIGKHFSVNQMINKEAVKQRLNRDDSGISFTEFSYNLLQAYDFACLNKNHGVALQIGGSDQWGNITSGIDLTRRLHQQQVYGLTVPLITKADGTKFGKTEGGAVWLDPKKTSPYKFYQFWINTADADVYRFLKFFTFMSLEEINALEEEDKNSGKAPRAQYVLAENVTGMVHGPEGLAAAKRITESLFSGDLHDMTEADFAQLAQDGMPTVELNRDADLQQALVNAELVPSRGQARTMIGSNAVAINGEKQADPEYVFTDADRLFGRYTLLRRGKKHYCLISWL</sequence>